<comment type="subcellular location">
    <subcellularLocation>
        <location evidence="1">Cytoplasm</location>
    </subcellularLocation>
</comment>
<comment type="similarity">
    <text evidence="1">Belongs to the TACO1 family.</text>
</comment>
<feature type="chain" id="PRO_0000175846" description="Probable transcriptional regulatory protein mhp472">
    <location>
        <begin position="1"/>
        <end position="242"/>
    </location>
</feature>
<feature type="sequence conflict" description="In Ref. 1; AAF22218." evidence="2" ref="1">
    <original>T</original>
    <variation>I</variation>
    <location>
        <position position="77"/>
    </location>
</feature>
<accession>Q9RGC3</accession>
<accession>Q600I3</accession>
<evidence type="ECO:0000255" key="1">
    <source>
        <dbReference type="HAMAP-Rule" id="MF_00693"/>
    </source>
</evidence>
<evidence type="ECO:0000305" key="2"/>
<gene>
    <name type="ordered locus">mhp472</name>
</gene>
<keyword id="KW-0963">Cytoplasm</keyword>
<keyword id="KW-0238">DNA-binding</keyword>
<keyword id="KW-0804">Transcription</keyword>
<keyword id="KW-0805">Transcription regulation</keyword>
<reference key="1">
    <citation type="submission" date="1999-04" db="EMBL/GenBank/DDBJ databases">
        <authorList>
            <person name="Shiuan D."/>
        </authorList>
    </citation>
    <scope>NUCLEOTIDE SEQUENCE [GENOMIC DNA]</scope>
</reference>
<reference key="2">
    <citation type="journal article" date="2004" name="J. Bacteriol.">
        <title>The genome sequence of Mycoplasma hyopneumoniae strain 232, the agent of swine mycoplasmosis.</title>
        <authorList>
            <person name="Minion F.C."/>
            <person name="Lefkowitz E.J."/>
            <person name="Madsen M.L."/>
            <person name="Cleary B.J."/>
            <person name="Swartzell S.M."/>
            <person name="Mahairas G.G."/>
        </authorList>
    </citation>
    <scope>NUCLEOTIDE SEQUENCE [LARGE SCALE GENOMIC DNA]</scope>
    <source>
        <strain>232</strain>
    </source>
</reference>
<protein>
    <recommendedName>
        <fullName evidence="1">Probable transcriptional regulatory protein mhp472</fullName>
    </recommendedName>
</protein>
<dbReference type="EMBL" id="AF140575">
    <property type="protein sequence ID" value="AAF22218.1"/>
    <property type="molecule type" value="Genomic_DNA"/>
</dbReference>
<dbReference type="EMBL" id="AE017332">
    <property type="protein sequence ID" value="AAV27588.1"/>
    <property type="molecule type" value="Genomic_DNA"/>
</dbReference>
<dbReference type="RefSeq" id="WP_011206306.1">
    <property type="nucleotide sequence ID" value="NC_006360.1"/>
</dbReference>
<dbReference type="SMR" id="Q9RGC3"/>
<dbReference type="KEGG" id="mhy:mhp472"/>
<dbReference type="eggNOG" id="COG0217">
    <property type="taxonomic scope" value="Bacteria"/>
</dbReference>
<dbReference type="HOGENOM" id="CLU_062974_2_2_14"/>
<dbReference type="PhylomeDB" id="Q9RGC3"/>
<dbReference type="Proteomes" id="UP000006822">
    <property type="component" value="Chromosome"/>
</dbReference>
<dbReference type="GO" id="GO:0005829">
    <property type="term" value="C:cytosol"/>
    <property type="evidence" value="ECO:0007669"/>
    <property type="project" value="TreeGrafter"/>
</dbReference>
<dbReference type="GO" id="GO:0003677">
    <property type="term" value="F:DNA binding"/>
    <property type="evidence" value="ECO:0007669"/>
    <property type="project" value="UniProtKB-UniRule"/>
</dbReference>
<dbReference type="GO" id="GO:0006355">
    <property type="term" value="P:regulation of DNA-templated transcription"/>
    <property type="evidence" value="ECO:0007669"/>
    <property type="project" value="UniProtKB-UniRule"/>
</dbReference>
<dbReference type="FunFam" id="1.10.10.200:FF:000002">
    <property type="entry name" value="Probable transcriptional regulatory protein CLM62_37755"/>
    <property type="match status" value="1"/>
</dbReference>
<dbReference type="Gene3D" id="1.10.10.200">
    <property type="match status" value="1"/>
</dbReference>
<dbReference type="Gene3D" id="3.30.70.980">
    <property type="match status" value="2"/>
</dbReference>
<dbReference type="HAMAP" id="MF_00693">
    <property type="entry name" value="Transcrip_reg_TACO1"/>
    <property type="match status" value="1"/>
</dbReference>
<dbReference type="InterPro" id="IPR017856">
    <property type="entry name" value="Integrase-like_N"/>
</dbReference>
<dbReference type="InterPro" id="IPR048300">
    <property type="entry name" value="TACO1_YebC-like_2nd/3rd_dom"/>
</dbReference>
<dbReference type="InterPro" id="IPR049083">
    <property type="entry name" value="TACO1_YebC_N"/>
</dbReference>
<dbReference type="InterPro" id="IPR002876">
    <property type="entry name" value="Transcrip_reg_TACO1-like"/>
</dbReference>
<dbReference type="InterPro" id="IPR026564">
    <property type="entry name" value="Transcrip_reg_TACO1-like_dom3"/>
</dbReference>
<dbReference type="InterPro" id="IPR029072">
    <property type="entry name" value="YebC-like"/>
</dbReference>
<dbReference type="NCBIfam" id="NF001030">
    <property type="entry name" value="PRK00110.1"/>
    <property type="match status" value="1"/>
</dbReference>
<dbReference type="NCBIfam" id="NF009044">
    <property type="entry name" value="PRK12378.1"/>
    <property type="match status" value="1"/>
</dbReference>
<dbReference type="NCBIfam" id="TIGR01033">
    <property type="entry name" value="YebC/PmpR family DNA-binding transcriptional regulator"/>
    <property type="match status" value="1"/>
</dbReference>
<dbReference type="PANTHER" id="PTHR12532:SF6">
    <property type="entry name" value="TRANSCRIPTIONAL REGULATORY PROTEIN YEBC-RELATED"/>
    <property type="match status" value="1"/>
</dbReference>
<dbReference type="PANTHER" id="PTHR12532">
    <property type="entry name" value="TRANSLATIONAL ACTIVATOR OF CYTOCHROME C OXIDASE 1"/>
    <property type="match status" value="1"/>
</dbReference>
<dbReference type="Pfam" id="PF20772">
    <property type="entry name" value="TACO1_YebC_N"/>
    <property type="match status" value="1"/>
</dbReference>
<dbReference type="Pfam" id="PF01709">
    <property type="entry name" value="Transcrip_reg"/>
    <property type="match status" value="1"/>
</dbReference>
<dbReference type="SUPFAM" id="SSF75625">
    <property type="entry name" value="YebC-like"/>
    <property type="match status" value="1"/>
</dbReference>
<name>Y472_MESH2</name>
<sequence>MAGHSKWANIKHRKGAQDALKAKIFNKFSKEIMVAVAKGGSDPNSNPALRLIISKARAKSMPKSNIEKAIAKGEGSTSNGENFKEIIYSGTLSHGISVIVVILTDNINRAIASLQALFRRANGQIGKQNSIPYLFEQKGYLEIEKNNLDEDDLMLFSLDNGAEDFQSDEENYMIYCQPRKISELKNEIEKKFSPNFRAVEISYFPNEWVELDQENTEKILNQIDNFLDDEDIQNVYHNLKFA</sequence>
<proteinExistence type="inferred from homology"/>
<organism>
    <name type="scientific">Mesomycoplasma hyopneumoniae (strain 232)</name>
    <name type="common">Mycoplasma hyopneumoniae</name>
    <dbReference type="NCBI Taxonomy" id="295358"/>
    <lineage>
        <taxon>Bacteria</taxon>
        <taxon>Bacillati</taxon>
        <taxon>Mycoplasmatota</taxon>
        <taxon>Mycoplasmoidales</taxon>
        <taxon>Metamycoplasmataceae</taxon>
        <taxon>Mesomycoplasma</taxon>
    </lineage>
</organism>